<name>PPAC_LACDB</name>
<keyword id="KW-0963">Cytoplasm</keyword>
<keyword id="KW-0378">Hydrolase</keyword>
<keyword id="KW-0464">Manganese</keyword>
<keyword id="KW-0479">Metal-binding</keyword>
<feature type="chain" id="PRO_1000012314" description="Probable manganese-dependent inorganic pyrophosphatase">
    <location>
        <begin position="1"/>
        <end position="311"/>
    </location>
</feature>
<feature type="binding site" evidence="1">
    <location>
        <position position="9"/>
    </location>
    <ligand>
        <name>Mn(2+)</name>
        <dbReference type="ChEBI" id="CHEBI:29035"/>
        <label>1</label>
    </ligand>
</feature>
<feature type="binding site" evidence="1">
    <location>
        <position position="13"/>
    </location>
    <ligand>
        <name>Mn(2+)</name>
        <dbReference type="ChEBI" id="CHEBI:29035"/>
        <label>1</label>
    </ligand>
</feature>
<feature type="binding site" evidence="1">
    <location>
        <position position="15"/>
    </location>
    <ligand>
        <name>Mn(2+)</name>
        <dbReference type="ChEBI" id="CHEBI:29035"/>
        <label>2</label>
    </ligand>
</feature>
<feature type="binding site" evidence="1">
    <location>
        <position position="75"/>
    </location>
    <ligand>
        <name>Mn(2+)</name>
        <dbReference type="ChEBI" id="CHEBI:29035"/>
        <label>1</label>
    </ligand>
</feature>
<feature type="binding site" evidence="1">
    <location>
        <position position="75"/>
    </location>
    <ligand>
        <name>Mn(2+)</name>
        <dbReference type="ChEBI" id="CHEBI:29035"/>
        <label>2</label>
    </ligand>
</feature>
<feature type="binding site" evidence="1">
    <location>
        <position position="97"/>
    </location>
    <ligand>
        <name>Mn(2+)</name>
        <dbReference type="ChEBI" id="CHEBI:29035"/>
        <label>2</label>
    </ligand>
</feature>
<feature type="binding site" evidence="1">
    <location>
        <position position="149"/>
    </location>
    <ligand>
        <name>Mn(2+)</name>
        <dbReference type="ChEBI" id="CHEBI:29035"/>
        <label>2</label>
    </ligand>
</feature>
<reference key="1">
    <citation type="journal article" date="2006" name="Proc. Natl. Acad. Sci. U.S.A.">
        <title>Comparative genomics of the lactic acid bacteria.</title>
        <authorList>
            <person name="Makarova K.S."/>
            <person name="Slesarev A."/>
            <person name="Wolf Y.I."/>
            <person name="Sorokin A."/>
            <person name="Mirkin B."/>
            <person name="Koonin E.V."/>
            <person name="Pavlov A."/>
            <person name="Pavlova N."/>
            <person name="Karamychev V."/>
            <person name="Polouchine N."/>
            <person name="Shakhova V."/>
            <person name="Grigoriev I."/>
            <person name="Lou Y."/>
            <person name="Rohksar D."/>
            <person name="Lucas S."/>
            <person name="Huang K."/>
            <person name="Goodstein D.M."/>
            <person name="Hawkins T."/>
            <person name="Plengvidhya V."/>
            <person name="Welker D."/>
            <person name="Hughes J."/>
            <person name="Goh Y."/>
            <person name="Benson A."/>
            <person name="Baldwin K."/>
            <person name="Lee J.-H."/>
            <person name="Diaz-Muniz I."/>
            <person name="Dosti B."/>
            <person name="Smeianov V."/>
            <person name="Wechter W."/>
            <person name="Barabote R."/>
            <person name="Lorca G."/>
            <person name="Altermann E."/>
            <person name="Barrangou R."/>
            <person name="Ganesan B."/>
            <person name="Xie Y."/>
            <person name="Rawsthorne H."/>
            <person name="Tamir D."/>
            <person name="Parker C."/>
            <person name="Breidt F."/>
            <person name="Broadbent J.R."/>
            <person name="Hutkins R."/>
            <person name="O'Sullivan D."/>
            <person name="Steele J."/>
            <person name="Unlu G."/>
            <person name="Saier M.H. Jr."/>
            <person name="Klaenhammer T."/>
            <person name="Richardson P."/>
            <person name="Kozyavkin S."/>
            <person name="Weimer B.C."/>
            <person name="Mills D.A."/>
        </authorList>
    </citation>
    <scope>NUCLEOTIDE SEQUENCE [LARGE SCALE GENOMIC DNA]</scope>
    <source>
        <strain>ATCC BAA-365 / Lb-18</strain>
    </source>
</reference>
<organism>
    <name type="scientific">Lactobacillus delbrueckii subsp. bulgaricus (strain ATCC BAA-365 / Lb-18)</name>
    <dbReference type="NCBI Taxonomy" id="321956"/>
    <lineage>
        <taxon>Bacteria</taxon>
        <taxon>Bacillati</taxon>
        <taxon>Bacillota</taxon>
        <taxon>Bacilli</taxon>
        <taxon>Lactobacillales</taxon>
        <taxon>Lactobacillaceae</taxon>
        <taxon>Lactobacillus</taxon>
    </lineage>
</organism>
<gene>
    <name evidence="1" type="primary">ppaC</name>
    <name type="ordered locus">LBUL_0902</name>
</gene>
<proteinExistence type="inferred from homology"/>
<dbReference type="EC" id="3.6.1.1" evidence="1"/>
<dbReference type="EMBL" id="CP000412">
    <property type="protein sequence ID" value="ABJ58479.1"/>
    <property type="molecule type" value="Genomic_DNA"/>
</dbReference>
<dbReference type="RefSeq" id="WP_011678222.1">
    <property type="nucleotide sequence ID" value="NC_008529.1"/>
</dbReference>
<dbReference type="SMR" id="Q04AP3"/>
<dbReference type="KEGG" id="lbu:LBUL_0902"/>
<dbReference type="HOGENOM" id="CLU_025243_0_1_9"/>
<dbReference type="BioCyc" id="LDEL321956:LBUL_RS04305-MONOMER"/>
<dbReference type="GO" id="GO:0005737">
    <property type="term" value="C:cytoplasm"/>
    <property type="evidence" value="ECO:0007669"/>
    <property type="project" value="UniProtKB-SubCell"/>
</dbReference>
<dbReference type="GO" id="GO:0004427">
    <property type="term" value="F:inorganic diphosphate phosphatase activity"/>
    <property type="evidence" value="ECO:0007669"/>
    <property type="project" value="UniProtKB-UniRule"/>
</dbReference>
<dbReference type="GO" id="GO:0030145">
    <property type="term" value="F:manganese ion binding"/>
    <property type="evidence" value="ECO:0007669"/>
    <property type="project" value="UniProtKB-UniRule"/>
</dbReference>
<dbReference type="FunFam" id="3.90.1640.10:FF:000001">
    <property type="entry name" value="Probable manganese-dependent inorganic pyrophosphatase"/>
    <property type="match status" value="1"/>
</dbReference>
<dbReference type="Gene3D" id="3.10.310.20">
    <property type="entry name" value="DHHA2 domain"/>
    <property type="match status" value="1"/>
</dbReference>
<dbReference type="Gene3D" id="3.90.1640.10">
    <property type="entry name" value="inorganic pyrophosphatase (n-terminal core)"/>
    <property type="match status" value="1"/>
</dbReference>
<dbReference type="HAMAP" id="MF_00207">
    <property type="entry name" value="PPase_C"/>
    <property type="match status" value="1"/>
</dbReference>
<dbReference type="InterPro" id="IPR001667">
    <property type="entry name" value="DDH_dom"/>
</dbReference>
<dbReference type="InterPro" id="IPR038763">
    <property type="entry name" value="DHH_sf"/>
</dbReference>
<dbReference type="InterPro" id="IPR004097">
    <property type="entry name" value="DHHA2"/>
</dbReference>
<dbReference type="InterPro" id="IPR038222">
    <property type="entry name" value="DHHA2_dom_sf"/>
</dbReference>
<dbReference type="InterPro" id="IPR022934">
    <property type="entry name" value="Mn-dep_inorganic_PyrPase"/>
</dbReference>
<dbReference type="InterPro" id="IPR051319">
    <property type="entry name" value="Oligoribo/pAp-PDE_c-di-AMP_PDE"/>
</dbReference>
<dbReference type="NCBIfam" id="NF003877">
    <property type="entry name" value="PRK05427.1"/>
    <property type="match status" value="1"/>
</dbReference>
<dbReference type="PANTHER" id="PTHR47618">
    <property type="entry name" value="BIFUNCTIONAL OLIGORIBONUCLEASE AND PAP PHOSPHATASE NRNA"/>
    <property type="match status" value="1"/>
</dbReference>
<dbReference type="PANTHER" id="PTHR47618:SF1">
    <property type="entry name" value="BIFUNCTIONAL OLIGORIBONUCLEASE AND PAP PHOSPHATASE NRNA"/>
    <property type="match status" value="1"/>
</dbReference>
<dbReference type="Pfam" id="PF01368">
    <property type="entry name" value="DHH"/>
    <property type="match status" value="1"/>
</dbReference>
<dbReference type="Pfam" id="PF02833">
    <property type="entry name" value="DHHA2"/>
    <property type="match status" value="1"/>
</dbReference>
<dbReference type="SMART" id="SM01131">
    <property type="entry name" value="DHHA2"/>
    <property type="match status" value="1"/>
</dbReference>
<dbReference type="SUPFAM" id="SSF64182">
    <property type="entry name" value="DHH phosphoesterases"/>
    <property type="match status" value="1"/>
</dbReference>
<accession>Q04AP3</accession>
<comment type="catalytic activity">
    <reaction evidence="1">
        <text>diphosphate + H2O = 2 phosphate + H(+)</text>
        <dbReference type="Rhea" id="RHEA:24576"/>
        <dbReference type="ChEBI" id="CHEBI:15377"/>
        <dbReference type="ChEBI" id="CHEBI:15378"/>
        <dbReference type="ChEBI" id="CHEBI:33019"/>
        <dbReference type="ChEBI" id="CHEBI:43474"/>
        <dbReference type="EC" id="3.6.1.1"/>
    </reaction>
</comment>
<comment type="cofactor">
    <cofactor evidence="1">
        <name>Mn(2+)</name>
        <dbReference type="ChEBI" id="CHEBI:29035"/>
    </cofactor>
    <text evidence="1">Binds 2 manganese ions per subunit.</text>
</comment>
<comment type="subcellular location">
    <subcellularLocation>
        <location evidence="1">Cytoplasm</location>
    </subcellularLocation>
</comment>
<comment type="similarity">
    <text evidence="1">Belongs to the PPase class C family.</text>
</comment>
<protein>
    <recommendedName>
        <fullName evidence="1">Probable manganese-dependent inorganic pyrophosphatase</fullName>
        <ecNumber evidence="1">3.6.1.1</ecNumber>
    </recommendedName>
    <alternativeName>
        <fullName evidence="1">Pyrophosphate phospho-hydrolase</fullName>
        <shortName evidence="1">PPase</shortName>
    </alternativeName>
</protein>
<evidence type="ECO:0000255" key="1">
    <source>
        <dbReference type="HAMAP-Rule" id="MF_00207"/>
    </source>
</evidence>
<sequence length="311" mass="34298">MEKELIFGHRNPDTDAIGTAIAYSYFQNQHGYNTEAVALGEANDETSFALKKFGFEAPRVVKTVANEVKAIMLVDHNEPQQSVEDRDQVKVTHVIDHHRISNFATIDPLFYRAEPVGCTSTVLWEMFKEQNMEIPANIAGIMLSAIISDTLLLKSPTTTDIDKEAVEELAKIAGVDYKEYGLELLKAGTNIAAKSVEELIDLDAKSFELGSKTARIAQVNVVDVPEALERKDAFLAAMEKDAKANGYDLFMLVITNVLDSDSEVLFIGDDESKSVFAKAFGKELVDSEAHLLGVVSRKKQIVPPLTRAFEA</sequence>